<gene>
    <name type="ordered locus">SACE_7110</name>
</gene>
<comment type="similarity">
    <text evidence="1">Belongs to the nitrobindin family.</text>
</comment>
<comment type="caution">
    <text evidence="3">Lacks the conserved His residue that binds heme iron in the nitrobindin family.</text>
</comment>
<feature type="chain" id="PRO_0000356948" description="Ferric nitrobindin-like protein">
    <location>
        <begin position="1"/>
        <end position="212"/>
    </location>
</feature>
<feature type="region of interest" description="Disordered" evidence="2">
    <location>
        <begin position="1"/>
        <end position="36"/>
    </location>
</feature>
<feature type="short sequence motif" description="GXWXGXG" evidence="1">
    <location>
        <begin position="64"/>
        <end position="70"/>
    </location>
</feature>
<feature type="compositionally biased region" description="Basic and acidic residues" evidence="2">
    <location>
        <begin position="1"/>
        <end position="11"/>
    </location>
</feature>
<reference key="1">
    <citation type="journal article" date="2007" name="Nat. Biotechnol.">
        <title>Complete genome sequence of the erythromycin-producing bacterium Saccharopolyspora erythraea NRRL23338.</title>
        <authorList>
            <person name="Oliynyk M."/>
            <person name="Samborskyy M."/>
            <person name="Lester J.B."/>
            <person name="Mironenko T."/>
            <person name="Scott N."/>
            <person name="Dickens S."/>
            <person name="Haydock S.F."/>
            <person name="Leadlay P.F."/>
        </authorList>
    </citation>
    <scope>NUCLEOTIDE SEQUENCE [LARGE SCALE GENOMIC DNA]</scope>
    <source>
        <strain>ATCC 11635 / DSM 40517 / JCM 4748 / NBRC 13426 / NCIMB 8594 / NRRL 2338</strain>
    </source>
</reference>
<accession>A4FQE4</accession>
<dbReference type="EMBL" id="AM420293">
    <property type="protein sequence ID" value="CAM06269.1"/>
    <property type="molecule type" value="Genomic_DNA"/>
</dbReference>
<dbReference type="RefSeq" id="WP_009949180.1">
    <property type="nucleotide sequence ID" value="NC_009142.1"/>
</dbReference>
<dbReference type="SMR" id="A4FQE4"/>
<dbReference type="STRING" id="405948.SACE_7110"/>
<dbReference type="KEGG" id="sen:SACE_7110"/>
<dbReference type="eggNOG" id="COG4044">
    <property type="taxonomic scope" value="Bacteria"/>
</dbReference>
<dbReference type="HOGENOM" id="CLU_085483_0_0_11"/>
<dbReference type="OrthoDB" id="4804006at2"/>
<dbReference type="Proteomes" id="UP000006728">
    <property type="component" value="Chromosome"/>
</dbReference>
<dbReference type="CDD" id="cd07828">
    <property type="entry name" value="lipocalin_heme-bd-THAP4-like"/>
    <property type="match status" value="1"/>
</dbReference>
<dbReference type="Gene3D" id="2.40.128.20">
    <property type="match status" value="1"/>
</dbReference>
<dbReference type="HAMAP" id="MF_01297">
    <property type="entry name" value="nitrobindin"/>
    <property type="match status" value="1"/>
</dbReference>
<dbReference type="InterPro" id="IPR012674">
    <property type="entry name" value="Calycin"/>
</dbReference>
<dbReference type="InterPro" id="IPR022939">
    <property type="entry name" value="Nb(III)_bact/plant"/>
</dbReference>
<dbReference type="InterPro" id="IPR045165">
    <property type="entry name" value="Nitrobindin"/>
</dbReference>
<dbReference type="InterPro" id="IPR014878">
    <property type="entry name" value="THAP4-like_heme-bd"/>
</dbReference>
<dbReference type="PANTHER" id="PTHR15854:SF4">
    <property type="entry name" value="PEROXYNITRITE ISOMERASE THAP4"/>
    <property type="match status" value="1"/>
</dbReference>
<dbReference type="PANTHER" id="PTHR15854">
    <property type="entry name" value="THAP4 PROTEIN"/>
    <property type="match status" value="1"/>
</dbReference>
<dbReference type="Pfam" id="PF08768">
    <property type="entry name" value="THAP4_heme-bd"/>
    <property type="match status" value="1"/>
</dbReference>
<dbReference type="SUPFAM" id="SSF50814">
    <property type="entry name" value="Lipocalins"/>
    <property type="match status" value="1"/>
</dbReference>
<keyword id="KW-1185">Reference proteome</keyword>
<sequence>MTSSDQPERGSGDAAVQAAAERAEQTRGRNVPQFDDLPGVGDTANLRLGPELNQACLALLPLVGVWRGDGEAKHPSLEESYWFRQQVSFAHDGRPFLFYESRAWRLDREGGEVVAPDFREVGWLRPQPDDTIEFLLVHSGGLSEMFFGKPRNQTTWEFGTDAVVRTPSAEDATAASRLYGVVEGALAYVEERATSEHELQPRLSAKLDRVVG</sequence>
<protein>
    <recommendedName>
        <fullName evidence="3">Ferric nitrobindin-like protein</fullName>
    </recommendedName>
</protein>
<name>NBLIK_SACEN</name>
<organism>
    <name type="scientific">Saccharopolyspora erythraea (strain ATCC 11635 / DSM 40517 / JCM 4748 / NBRC 13426 / NCIMB 8594 / NRRL 2338)</name>
    <dbReference type="NCBI Taxonomy" id="405948"/>
    <lineage>
        <taxon>Bacteria</taxon>
        <taxon>Bacillati</taxon>
        <taxon>Actinomycetota</taxon>
        <taxon>Actinomycetes</taxon>
        <taxon>Pseudonocardiales</taxon>
        <taxon>Pseudonocardiaceae</taxon>
        <taxon>Saccharopolyspora</taxon>
    </lineage>
</organism>
<proteinExistence type="inferred from homology"/>
<evidence type="ECO:0000255" key="1">
    <source>
        <dbReference type="HAMAP-Rule" id="MF_01297"/>
    </source>
</evidence>
<evidence type="ECO:0000256" key="2">
    <source>
        <dbReference type="SAM" id="MobiDB-lite"/>
    </source>
</evidence>
<evidence type="ECO:0000305" key="3"/>